<feature type="chain" id="PRO_0000319334" description="Probable glucomannan 4-beta-mannosyltransferase 15">
    <location>
        <begin position="1"/>
        <end position="537"/>
    </location>
</feature>
<feature type="transmembrane region" description="Helical" evidence="2">
    <location>
        <begin position="50"/>
        <end position="70"/>
    </location>
</feature>
<feature type="transmembrane region" description="Helical" evidence="2">
    <location>
        <begin position="382"/>
        <end position="402"/>
    </location>
</feature>
<feature type="transmembrane region" description="Helical" evidence="2">
    <location>
        <begin position="418"/>
        <end position="438"/>
    </location>
</feature>
<feature type="transmembrane region" description="Helical" evidence="2">
    <location>
        <begin position="494"/>
        <end position="514"/>
    </location>
</feature>
<feature type="transmembrane region" description="Helical" evidence="2">
    <location>
        <begin position="515"/>
        <end position="535"/>
    </location>
</feature>
<feature type="active site" evidence="2">
    <location>
        <position position="150"/>
    </location>
</feature>
<feature type="active site" evidence="2">
    <location>
        <position position="303"/>
    </location>
</feature>
<feature type="binding site" evidence="2">
    <location>
        <position position="209"/>
    </location>
    <ligand>
        <name>substrate</name>
    </ligand>
</feature>
<feature type="binding site" evidence="2">
    <location>
        <position position="211"/>
    </location>
    <ligand>
        <name>substrate</name>
    </ligand>
</feature>
<sequence>MFLLLKPLLSLHDLSLNLLSVMFHGETLKASVDGVGINMSTMWRETRNVFIVPLFKCIVVMCLIISLLVFVESVYMNLVVLYVKLFNRKPEKVYKWEAMQEDMELGHQNYPMVLVQIPMYNEREVFELSIGAACRLTWPSDRLIVQVLDDSTDPAIMELVSMECTKWASKDININYERRENRNGYKAGALKHGMRHSYVKQCQYLAIFDADFQPEPDYLQRAIPFLIHNPEVALVQARWRFVNANTCLMTRMQEMSLNYHFMAEQQSGSTRHAFFGFNGTAGVWRMVAMEEAGGWKDRTTVEDMDLAVRVGLLGWKFIFVNDLEVKSELPSQFKAFRFQQHRWSCGPANLIRKMTMEIIHNKRVKIWKKFYVIYSFFFLRKIVVHFFTYFFYCVILPTSVFLPEVNIPNWSTIYVPSVITLLSAIATPRSFYLVIFWVLFENVMAMHRTKGTLIGLFEGGRVNEWVVTEKLGDTLNTKLLPQNGRLPKRVNLKEMMMGIYILCCACYDFAFGNAFLYLYLFMQATAFLISGVGFVGT</sequence>
<evidence type="ECO:0000250" key="1">
    <source>
        <dbReference type="UniProtKB" id="Q9LZR3"/>
    </source>
</evidence>
<evidence type="ECO:0000255" key="2"/>
<evidence type="ECO:0000303" key="3">
    <source>
    </source>
</evidence>
<evidence type="ECO:0000305" key="4"/>
<name>CSLAF_ARATH</name>
<proteinExistence type="inferred from homology"/>
<keyword id="KW-0961">Cell wall biogenesis/degradation</keyword>
<keyword id="KW-0328">Glycosyltransferase</keyword>
<keyword id="KW-0333">Golgi apparatus</keyword>
<keyword id="KW-0472">Membrane</keyword>
<keyword id="KW-1185">Reference proteome</keyword>
<keyword id="KW-0808">Transferase</keyword>
<keyword id="KW-0812">Transmembrane</keyword>
<keyword id="KW-1133">Transmembrane helix</keyword>
<reference key="1">
    <citation type="journal article" date="1999" name="Nature">
        <title>Sequence and analysis of chromosome 4 of the plant Arabidopsis thaliana.</title>
        <authorList>
            <person name="Mayer K.F.X."/>
            <person name="Schueller C."/>
            <person name="Wambutt R."/>
            <person name="Murphy G."/>
            <person name="Volckaert G."/>
            <person name="Pohl T."/>
            <person name="Duesterhoeft A."/>
            <person name="Stiekema W."/>
            <person name="Entian K.-D."/>
            <person name="Terryn N."/>
            <person name="Harris B."/>
            <person name="Ansorge W."/>
            <person name="Brandt P."/>
            <person name="Grivell L.A."/>
            <person name="Rieger M."/>
            <person name="Weichselgartner M."/>
            <person name="de Simone V."/>
            <person name="Obermaier B."/>
            <person name="Mache R."/>
            <person name="Mueller M."/>
            <person name="Kreis M."/>
            <person name="Delseny M."/>
            <person name="Puigdomenech P."/>
            <person name="Watson M."/>
            <person name="Schmidtheini T."/>
            <person name="Reichert B."/>
            <person name="Portetelle D."/>
            <person name="Perez-Alonso M."/>
            <person name="Boutry M."/>
            <person name="Bancroft I."/>
            <person name="Vos P."/>
            <person name="Hoheisel J."/>
            <person name="Zimmermann W."/>
            <person name="Wedler H."/>
            <person name="Ridley P."/>
            <person name="Langham S.-A."/>
            <person name="McCullagh B."/>
            <person name="Bilham L."/>
            <person name="Robben J."/>
            <person name="van der Schueren J."/>
            <person name="Grymonprez B."/>
            <person name="Chuang Y.-J."/>
            <person name="Vandenbussche F."/>
            <person name="Braeken M."/>
            <person name="Weltjens I."/>
            <person name="Voet M."/>
            <person name="Bastiaens I."/>
            <person name="Aert R."/>
            <person name="Defoor E."/>
            <person name="Weitzenegger T."/>
            <person name="Bothe G."/>
            <person name="Ramsperger U."/>
            <person name="Hilbert H."/>
            <person name="Braun M."/>
            <person name="Holzer E."/>
            <person name="Brandt A."/>
            <person name="Peters S."/>
            <person name="van Staveren M."/>
            <person name="Dirkse W."/>
            <person name="Mooijman P."/>
            <person name="Klein Lankhorst R."/>
            <person name="Rose M."/>
            <person name="Hauf J."/>
            <person name="Koetter P."/>
            <person name="Berneiser S."/>
            <person name="Hempel S."/>
            <person name="Feldpausch M."/>
            <person name="Lamberth S."/>
            <person name="Van den Daele H."/>
            <person name="De Keyser A."/>
            <person name="Buysshaert C."/>
            <person name="Gielen J."/>
            <person name="Villarroel R."/>
            <person name="De Clercq R."/>
            <person name="van Montagu M."/>
            <person name="Rogers J."/>
            <person name="Cronin A."/>
            <person name="Quail M.A."/>
            <person name="Bray-Allen S."/>
            <person name="Clark L."/>
            <person name="Doggett J."/>
            <person name="Hall S."/>
            <person name="Kay M."/>
            <person name="Lennard N."/>
            <person name="McLay K."/>
            <person name="Mayes R."/>
            <person name="Pettett A."/>
            <person name="Rajandream M.A."/>
            <person name="Lyne M."/>
            <person name="Benes V."/>
            <person name="Rechmann S."/>
            <person name="Borkova D."/>
            <person name="Bloecker H."/>
            <person name="Scharfe M."/>
            <person name="Grimm M."/>
            <person name="Loehnert T.-H."/>
            <person name="Dose S."/>
            <person name="de Haan M."/>
            <person name="Maarse A.C."/>
            <person name="Schaefer M."/>
            <person name="Mueller-Auer S."/>
            <person name="Gabel C."/>
            <person name="Fuchs M."/>
            <person name="Fartmann B."/>
            <person name="Granderath K."/>
            <person name="Dauner D."/>
            <person name="Herzl A."/>
            <person name="Neumann S."/>
            <person name="Argiriou A."/>
            <person name="Vitale D."/>
            <person name="Liguori R."/>
            <person name="Piravandi E."/>
            <person name="Massenet O."/>
            <person name="Quigley F."/>
            <person name="Clabauld G."/>
            <person name="Muendlein A."/>
            <person name="Felber R."/>
            <person name="Schnabl S."/>
            <person name="Hiller R."/>
            <person name="Schmidt W."/>
            <person name="Lecharny A."/>
            <person name="Aubourg S."/>
            <person name="Chefdor F."/>
            <person name="Cooke R."/>
            <person name="Berger C."/>
            <person name="Monfort A."/>
            <person name="Casacuberta E."/>
            <person name="Gibbons T."/>
            <person name="Weber N."/>
            <person name="Vandenbol M."/>
            <person name="Bargues M."/>
            <person name="Terol J."/>
            <person name="Torres A."/>
            <person name="Perez-Perez A."/>
            <person name="Purnelle B."/>
            <person name="Bent E."/>
            <person name="Johnson S."/>
            <person name="Tacon D."/>
            <person name="Jesse T."/>
            <person name="Heijnen L."/>
            <person name="Schwarz S."/>
            <person name="Scholler P."/>
            <person name="Heber S."/>
            <person name="Francs P."/>
            <person name="Bielke C."/>
            <person name="Frishman D."/>
            <person name="Haase D."/>
            <person name="Lemcke K."/>
            <person name="Mewes H.-W."/>
            <person name="Stocker S."/>
            <person name="Zaccaria P."/>
            <person name="Bevan M."/>
            <person name="Wilson R.K."/>
            <person name="de la Bastide M."/>
            <person name="Habermann K."/>
            <person name="Parnell L."/>
            <person name="Dedhia N."/>
            <person name="Gnoj L."/>
            <person name="Schutz K."/>
            <person name="Huang E."/>
            <person name="Spiegel L."/>
            <person name="Sekhon M."/>
            <person name="Murray J."/>
            <person name="Sheet P."/>
            <person name="Cordes M."/>
            <person name="Abu-Threideh J."/>
            <person name="Stoneking T."/>
            <person name="Kalicki J."/>
            <person name="Graves T."/>
            <person name="Harmon G."/>
            <person name="Edwards J."/>
            <person name="Latreille P."/>
            <person name="Courtney L."/>
            <person name="Cloud J."/>
            <person name="Abbott A."/>
            <person name="Scott K."/>
            <person name="Johnson D."/>
            <person name="Minx P."/>
            <person name="Bentley D."/>
            <person name="Fulton B."/>
            <person name="Miller N."/>
            <person name="Greco T."/>
            <person name="Kemp K."/>
            <person name="Kramer J."/>
            <person name="Fulton L."/>
            <person name="Mardis E."/>
            <person name="Dante M."/>
            <person name="Pepin K."/>
            <person name="Hillier L.W."/>
            <person name="Nelson J."/>
            <person name="Spieth J."/>
            <person name="Ryan E."/>
            <person name="Andrews S."/>
            <person name="Geisel C."/>
            <person name="Layman D."/>
            <person name="Du H."/>
            <person name="Ali J."/>
            <person name="Berghoff A."/>
            <person name="Jones K."/>
            <person name="Drone K."/>
            <person name="Cotton M."/>
            <person name="Joshu C."/>
            <person name="Antonoiu B."/>
            <person name="Zidanic M."/>
            <person name="Strong C."/>
            <person name="Sun H."/>
            <person name="Lamar B."/>
            <person name="Yordan C."/>
            <person name="Ma P."/>
            <person name="Zhong J."/>
            <person name="Preston R."/>
            <person name="Vil D."/>
            <person name="Shekher M."/>
            <person name="Matero A."/>
            <person name="Shah R."/>
            <person name="Swaby I.K."/>
            <person name="O'Shaughnessy A."/>
            <person name="Rodriguez M."/>
            <person name="Hoffman J."/>
            <person name="Till S."/>
            <person name="Granat S."/>
            <person name="Shohdy N."/>
            <person name="Hasegawa A."/>
            <person name="Hameed A."/>
            <person name="Lodhi M."/>
            <person name="Johnson A."/>
            <person name="Chen E."/>
            <person name="Marra M.A."/>
            <person name="Martienssen R."/>
            <person name="McCombie W.R."/>
        </authorList>
    </citation>
    <scope>NUCLEOTIDE SEQUENCE [LARGE SCALE GENOMIC DNA]</scope>
    <source>
        <strain>cv. Columbia</strain>
    </source>
</reference>
<reference key="2">
    <citation type="journal article" date="2017" name="Plant J.">
        <title>Araport11: a complete reannotation of the Arabidopsis thaliana reference genome.</title>
        <authorList>
            <person name="Cheng C.Y."/>
            <person name="Krishnakumar V."/>
            <person name="Chan A.P."/>
            <person name="Thibaud-Nissen F."/>
            <person name="Schobel S."/>
            <person name="Town C.D."/>
        </authorList>
    </citation>
    <scope>GENOME REANNOTATION</scope>
    <source>
        <strain>cv. Columbia</strain>
    </source>
</reference>
<reference key="3">
    <citation type="journal article" date="2000" name="Plant Physiol.">
        <title>The cellulose synthase superfamily.</title>
        <authorList>
            <person name="Richmond T.A."/>
            <person name="Somerville C.R."/>
        </authorList>
    </citation>
    <scope>GENE FAMILY</scope>
    <scope>NOMENCLATURE</scope>
</reference>
<protein>
    <recommendedName>
        <fullName evidence="4">Probable glucomannan 4-beta-mannosyltransferase 15</fullName>
        <ecNumber evidence="1">2.4.1.32</ecNumber>
    </recommendedName>
    <alternativeName>
        <fullName evidence="3">Cellulose synthase-like protein A15</fullName>
        <shortName evidence="3">AtCslA15</shortName>
    </alternativeName>
    <alternativeName>
        <fullName evidence="4">Glucomannan synthase</fullName>
    </alternativeName>
    <alternativeName>
        <fullName evidence="4">Mannan synthase 15</fullName>
    </alternativeName>
</protein>
<comment type="function">
    <text evidence="1">Probable mannan synthase which consists of a 4-beta-mannosyltransferase activity on mannan using GDP-mannose. The beta-1,4-mannan product is the backbone for galactomannan synthesis by galactomannan galactosyltransferase. Galactomannan is a noncellulosic polysaccharides of plant cell wall.</text>
</comment>
<comment type="catalytic activity">
    <reaction evidence="1">
        <text>GDP-mannose + (glucomannan)n = GDP + (glucomannan)n+1.</text>
        <dbReference type="EC" id="2.4.1.32"/>
    </reaction>
</comment>
<comment type="subcellular location">
    <subcellularLocation>
        <location evidence="4">Golgi apparatus membrane</location>
        <topology evidence="4">Multi-pass membrane protein</topology>
    </subcellularLocation>
</comment>
<comment type="similarity">
    <text evidence="4">Belongs to the glycosyltransferase 2 family. Plant cellulose synthase-like A subfamily.</text>
</comment>
<comment type="sequence caution" evidence="4">
    <conflict type="erroneous gene model prediction">
        <sequence resource="EMBL-CDS" id="CAB40776"/>
    </conflict>
</comment>
<comment type="sequence caution" evidence="4">
    <conflict type="erroneous gene model prediction">
        <sequence resource="EMBL-CDS" id="CAB78383"/>
    </conflict>
</comment>
<gene>
    <name evidence="3" type="primary">CSLA15</name>
    <name type="ordered locus">At4g13410</name>
    <name type="ORF">T9E8.150</name>
</gene>
<organism>
    <name type="scientific">Arabidopsis thaliana</name>
    <name type="common">Mouse-ear cress</name>
    <dbReference type="NCBI Taxonomy" id="3702"/>
    <lineage>
        <taxon>Eukaryota</taxon>
        <taxon>Viridiplantae</taxon>
        <taxon>Streptophyta</taxon>
        <taxon>Embryophyta</taxon>
        <taxon>Tracheophyta</taxon>
        <taxon>Spermatophyta</taxon>
        <taxon>Magnoliopsida</taxon>
        <taxon>eudicotyledons</taxon>
        <taxon>Gunneridae</taxon>
        <taxon>Pentapetalae</taxon>
        <taxon>rosids</taxon>
        <taxon>malvids</taxon>
        <taxon>Brassicales</taxon>
        <taxon>Brassicaceae</taxon>
        <taxon>Camelineae</taxon>
        <taxon>Arabidopsis</taxon>
    </lineage>
</organism>
<dbReference type="EC" id="2.4.1.32" evidence="1"/>
<dbReference type="EMBL" id="AL049608">
    <property type="protein sequence ID" value="CAB40776.1"/>
    <property type="status" value="ALT_SEQ"/>
    <property type="molecule type" value="Genomic_DNA"/>
</dbReference>
<dbReference type="EMBL" id="AL161536">
    <property type="protein sequence ID" value="CAB78383.1"/>
    <property type="status" value="ALT_SEQ"/>
    <property type="molecule type" value="Genomic_DNA"/>
</dbReference>
<dbReference type="EMBL" id="CP002687">
    <property type="protein sequence ID" value="AEE83276.1"/>
    <property type="molecule type" value="Genomic_DNA"/>
</dbReference>
<dbReference type="PIR" id="T06298">
    <property type="entry name" value="T06298"/>
</dbReference>
<dbReference type="FunCoup" id="Q9T0L2">
    <property type="interactions" value="18"/>
</dbReference>
<dbReference type="STRING" id="3702.Q9T0L2"/>
<dbReference type="CAZy" id="GT2">
    <property type="family name" value="Glycosyltransferase Family 2"/>
</dbReference>
<dbReference type="PaxDb" id="3702-AT4G13410.1"/>
<dbReference type="EnsemblPlants" id="AT4G13410.1">
    <property type="protein sequence ID" value="AT4G13410.1"/>
    <property type="gene ID" value="AT4G13410"/>
</dbReference>
<dbReference type="GeneID" id="826972"/>
<dbReference type="Gramene" id="AT4G13410.1">
    <property type="protein sequence ID" value="AT4G13410.1"/>
    <property type="gene ID" value="AT4G13410"/>
</dbReference>
<dbReference type="KEGG" id="ath:AT4G13410"/>
<dbReference type="Araport" id="AT4G13410"/>
<dbReference type="TAIR" id="AT4G13410">
    <property type="gene designation" value="ATCSLA15"/>
</dbReference>
<dbReference type="eggNOG" id="ENOG502QR7J">
    <property type="taxonomic scope" value="Eukaryota"/>
</dbReference>
<dbReference type="HOGENOM" id="CLU_012856_2_0_1"/>
<dbReference type="InParanoid" id="Q9T0L2"/>
<dbReference type="OMA" id="MVSVECA"/>
<dbReference type="PhylomeDB" id="Q9T0L2"/>
<dbReference type="BioCyc" id="ARA:AT4G13410-MONOMER"/>
<dbReference type="PRO" id="PR:Q9T0L2"/>
<dbReference type="Proteomes" id="UP000006548">
    <property type="component" value="Chromosome 4"/>
</dbReference>
<dbReference type="ExpressionAtlas" id="Q9T0L2">
    <property type="expression patterns" value="baseline and differential"/>
</dbReference>
<dbReference type="GO" id="GO:0000139">
    <property type="term" value="C:Golgi membrane"/>
    <property type="evidence" value="ECO:0007669"/>
    <property type="project" value="UniProtKB-SubCell"/>
</dbReference>
<dbReference type="GO" id="GO:0047259">
    <property type="term" value="F:glucomannan 4-beta-mannosyltransferase activity"/>
    <property type="evidence" value="ECO:0007669"/>
    <property type="project" value="UniProtKB-EC"/>
</dbReference>
<dbReference type="GO" id="GO:0071555">
    <property type="term" value="P:cell wall organization"/>
    <property type="evidence" value="ECO:0007669"/>
    <property type="project" value="UniProtKB-KW"/>
</dbReference>
<dbReference type="CDD" id="cd06437">
    <property type="entry name" value="CESA_CaSu_A2"/>
    <property type="match status" value="1"/>
</dbReference>
<dbReference type="FunFam" id="3.90.550.10:FF:000015">
    <property type="entry name" value="Glucomannan 4-beta-mannosyltransferase 9"/>
    <property type="match status" value="1"/>
</dbReference>
<dbReference type="Gene3D" id="3.90.550.10">
    <property type="entry name" value="Spore Coat Polysaccharide Biosynthesis Protein SpsA, Chain A"/>
    <property type="match status" value="1"/>
</dbReference>
<dbReference type="InterPro" id="IPR001173">
    <property type="entry name" value="Glyco_trans_2-like"/>
</dbReference>
<dbReference type="InterPro" id="IPR029044">
    <property type="entry name" value="Nucleotide-diphossugar_trans"/>
</dbReference>
<dbReference type="PANTHER" id="PTHR32044:SF66">
    <property type="entry name" value="GLUCOMANNAN 4-BETA-MANNOSYLTRANSFERASE 15-RELATED"/>
    <property type="match status" value="1"/>
</dbReference>
<dbReference type="PANTHER" id="PTHR32044">
    <property type="entry name" value="GLUCOMANNAN 4-BETA-MANNOSYLTRANSFERASE 9"/>
    <property type="match status" value="1"/>
</dbReference>
<dbReference type="Pfam" id="PF13632">
    <property type="entry name" value="Glyco_trans_2_3"/>
    <property type="match status" value="1"/>
</dbReference>
<dbReference type="SUPFAM" id="SSF53448">
    <property type="entry name" value="Nucleotide-diphospho-sugar transferases"/>
    <property type="match status" value="1"/>
</dbReference>
<accession>Q9T0L2</accession>